<evidence type="ECO:0000255" key="1">
    <source>
        <dbReference type="HAMAP-Rule" id="MF_00033"/>
    </source>
</evidence>
<comment type="function">
    <text evidence="1">Cell wall formation. Catalyzes the transfer of a GlcNAc subunit on undecaprenyl-pyrophosphoryl-MurNAc-pentapeptide (lipid intermediate I) to form undecaprenyl-pyrophosphoryl-MurNAc-(pentapeptide)GlcNAc (lipid intermediate II).</text>
</comment>
<comment type="catalytic activity">
    <reaction evidence="1">
        <text>di-trans,octa-cis-undecaprenyl diphospho-N-acetyl-alpha-D-muramoyl-L-alanyl-D-glutamyl-meso-2,6-diaminopimeloyl-D-alanyl-D-alanine + UDP-N-acetyl-alpha-D-glucosamine = di-trans,octa-cis-undecaprenyl diphospho-[N-acetyl-alpha-D-glucosaminyl-(1-&gt;4)]-N-acetyl-alpha-D-muramoyl-L-alanyl-D-glutamyl-meso-2,6-diaminopimeloyl-D-alanyl-D-alanine + UDP + H(+)</text>
        <dbReference type="Rhea" id="RHEA:31227"/>
        <dbReference type="ChEBI" id="CHEBI:15378"/>
        <dbReference type="ChEBI" id="CHEBI:57705"/>
        <dbReference type="ChEBI" id="CHEBI:58223"/>
        <dbReference type="ChEBI" id="CHEBI:61387"/>
        <dbReference type="ChEBI" id="CHEBI:61388"/>
        <dbReference type="EC" id="2.4.1.227"/>
    </reaction>
</comment>
<comment type="pathway">
    <text evidence="1">Cell wall biogenesis; peptidoglycan biosynthesis.</text>
</comment>
<comment type="subcellular location">
    <subcellularLocation>
        <location evidence="1">Cell inner membrane</location>
        <topology evidence="1">Peripheral membrane protein</topology>
        <orientation evidence="1">Cytoplasmic side</orientation>
    </subcellularLocation>
</comment>
<comment type="similarity">
    <text evidence="1">Belongs to the glycosyltransferase 28 family. MurG subfamily.</text>
</comment>
<dbReference type="EC" id="2.4.1.227" evidence="1"/>
<dbReference type="EMBL" id="CP000390">
    <property type="protein sequence ID" value="ABG63400.1"/>
    <property type="molecule type" value="Genomic_DNA"/>
</dbReference>
<dbReference type="SMR" id="Q11GS5"/>
<dbReference type="STRING" id="266779.Meso_2007"/>
<dbReference type="CAZy" id="GT28">
    <property type="family name" value="Glycosyltransferase Family 28"/>
</dbReference>
<dbReference type="KEGG" id="mes:Meso_2007"/>
<dbReference type="eggNOG" id="COG0707">
    <property type="taxonomic scope" value="Bacteria"/>
</dbReference>
<dbReference type="HOGENOM" id="CLU_037404_2_1_5"/>
<dbReference type="OrthoDB" id="9808936at2"/>
<dbReference type="UniPathway" id="UPA00219"/>
<dbReference type="GO" id="GO:0005886">
    <property type="term" value="C:plasma membrane"/>
    <property type="evidence" value="ECO:0007669"/>
    <property type="project" value="UniProtKB-SubCell"/>
</dbReference>
<dbReference type="GO" id="GO:0051991">
    <property type="term" value="F:UDP-N-acetyl-D-glucosamine:N-acetylmuramoyl-L-alanyl-D-glutamyl-meso-2,6-diaminopimelyl-D-alanyl-D-alanine-diphosphoundecaprenol 4-beta-N-acetylglucosaminlytransferase activity"/>
    <property type="evidence" value="ECO:0007669"/>
    <property type="project" value="RHEA"/>
</dbReference>
<dbReference type="GO" id="GO:0050511">
    <property type="term" value="F:undecaprenyldiphospho-muramoylpentapeptide beta-N-acetylglucosaminyltransferase activity"/>
    <property type="evidence" value="ECO:0007669"/>
    <property type="project" value="UniProtKB-UniRule"/>
</dbReference>
<dbReference type="GO" id="GO:0005975">
    <property type="term" value="P:carbohydrate metabolic process"/>
    <property type="evidence" value="ECO:0007669"/>
    <property type="project" value="InterPro"/>
</dbReference>
<dbReference type="GO" id="GO:0051301">
    <property type="term" value="P:cell division"/>
    <property type="evidence" value="ECO:0007669"/>
    <property type="project" value="UniProtKB-KW"/>
</dbReference>
<dbReference type="GO" id="GO:0071555">
    <property type="term" value="P:cell wall organization"/>
    <property type="evidence" value="ECO:0007669"/>
    <property type="project" value="UniProtKB-KW"/>
</dbReference>
<dbReference type="GO" id="GO:0030259">
    <property type="term" value="P:lipid glycosylation"/>
    <property type="evidence" value="ECO:0007669"/>
    <property type="project" value="UniProtKB-UniRule"/>
</dbReference>
<dbReference type="GO" id="GO:0009252">
    <property type="term" value="P:peptidoglycan biosynthetic process"/>
    <property type="evidence" value="ECO:0007669"/>
    <property type="project" value="UniProtKB-UniRule"/>
</dbReference>
<dbReference type="GO" id="GO:0008360">
    <property type="term" value="P:regulation of cell shape"/>
    <property type="evidence" value="ECO:0007669"/>
    <property type="project" value="UniProtKB-KW"/>
</dbReference>
<dbReference type="CDD" id="cd03785">
    <property type="entry name" value="GT28_MurG"/>
    <property type="match status" value="1"/>
</dbReference>
<dbReference type="Gene3D" id="3.40.50.2000">
    <property type="entry name" value="Glycogen Phosphorylase B"/>
    <property type="match status" value="2"/>
</dbReference>
<dbReference type="HAMAP" id="MF_00033">
    <property type="entry name" value="MurG"/>
    <property type="match status" value="1"/>
</dbReference>
<dbReference type="InterPro" id="IPR006009">
    <property type="entry name" value="GlcNAc_MurG"/>
</dbReference>
<dbReference type="InterPro" id="IPR007235">
    <property type="entry name" value="Glyco_trans_28_C"/>
</dbReference>
<dbReference type="InterPro" id="IPR004276">
    <property type="entry name" value="GlycoTrans_28_N"/>
</dbReference>
<dbReference type="NCBIfam" id="TIGR01133">
    <property type="entry name" value="murG"/>
    <property type="match status" value="1"/>
</dbReference>
<dbReference type="PANTHER" id="PTHR21015:SF22">
    <property type="entry name" value="GLYCOSYLTRANSFERASE"/>
    <property type="match status" value="1"/>
</dbReference>
<dbReference type="PANTHER" id="PTHR21015">
    <property type="entry name" value="UDP-N-ACETYLGLUCOSAMINE--N-ACETYLMURAMYL-(PENTAPEPTIDE) PYROPHOSPHORYL-UNDECAPRENOL N-ACETYLGLUCOSAMINE TRANSFERASE 1"/>
    <property type="match status" value="1"/>
</dbReference>
<dbReference type="Pfam" id="PF04101">
    <property type="entry name" value="Glyco_tran_28_C"/>
    <property type="match status" value="1"/>
</dbReference>
<dbReference type="Pfam" id="PF03033">
    <property type="entry name" value="Glyco_transf_28"/>
    <property type="match status" value="1"/>
</dbReference>
<dbReference type="SUPFAM" id="SSF53756">
    <property type="entry name" value="UDP-Glycosyltransferase/glycogen phosphorylase"/>
    <property type="match status" value="1"/>
</dbReference>
<organism>
    <name type="scientific">Chelativorans sp. (strain BNC1)</name>
    <dbReference type="NCBI Taxonomy" id="266779"/>
    <lineage>
        <taxon>Bacteria</taxon>
        <taxon>Pseudomonadati</taxon>
        <taxon>Pseudomonadota</taxon>
        <taxon>Alphaproteobacteria</taxon>
        <taxon>Hyphomicrobiales</taxon>
        <taxon>Phyllobacteriaceae</taxon>
        <taxon>Chelativorans</taxon>
    </lineage>
</organism>
<name>MURG_CHESB</name>
<reference key="1">
    <citation type="submission" date="2006-06" db="EMBL/GenBank/DDBJ databases">
        <title>Complete sequence of chromosome of Mesorhizobium sp. BNC1.</title>
        <authorList>
            <consortium name="US DOE Joint Genome Institute"/>
            <person name="Copeland A."/>
            <person name="Lucas S."/>
            <person name="Lapidus A."/>
            <person name="Barry K."/>
            <person name="Detter J.C."/>
            <person name="Glavina del Rio T."/>
            <person name="Hammon N."/>
            <person name="Israni S."/>
            <person name="Dalin E."/>
            <person name="Tice H."/>
            <person name="Pitluck S."/>
            <person name="Chertkov O."/>
            <person name="Brettin T."/>
            <person name="Bruce D."/>
            <person name="Han C."/>
            <person name="Tapia R."/>
            <person name="Gilna P."/>
            <person name="Schmutz J."/>
            <person name="Larimer F."/>
            <person name="Land M."/>
            <person name="Hauser L."/>
            <person name="Kyrpides N."/>
            <person name="Mikhailova N."/>
            <person name="Richardson P."/>
        </authorList>
    </citation>
    <scope>NUCLEOTIDE SEQUENCE [LARGE SCALE GENOMIC DNA]</scope>
    <source>
        <strain>BNC1</strain>
    </source>
</reference>
<accession>Q11GS5</accession>
<keyword id="KW-0131">Cell cycle</keyword>
<keyword id="KW-0132">Cell division</keyword>
<keyword id="KW-0997">Cell inner membrane</keyword>
<keyword id="KW-1003">Cell membrane</keyword>
<keyword id="KW-0133">Cell shape</keyword>
<keyword id="KW-0961">Cell wall biogenesis/degradation</keyword>
<keyword id="KW-0328">Glycosyltransferase</keyword>
<keyword id="KW-0472">Membrane</keyword>
<keyword id="KW-0573">Peptidoglycan synthesis</keyword>
<keyword id="KW-0808">Transferase</keyword>
<gene>
    <name evidence="1" type="primary">murG</name>
    <name type="ordered locus">Meso_2007</name>
</gene>
<proteinExistence type="inferred from homology"/>
<feature type="chain" id="PRO_0000315116" description="UDP-N-acetylglucosamine--N-acetylmuramyl-(pentapeptide) pyrophosphoryl-undecaprenol N-acetylglucosamine transferase">
    <location>
        <begin position="1"/>
        <end position="375"/>
    </location>
</feature>
<feature type="binding site" evidence="1">
    <location>
        <begin position="13"/>
        <end position="15"/>
    </location>
    <ligand>
        <name>UDP-N-acetyl-alpha-D-glucosamine</name>
        <dbReference type="ChEBI" id="CHEBI:57705"/>
    </ligand>
</feature>
<feature type="binding site" evidence="1">
    <location>
        <position position="124"/>
    </location>
    <ligand>
        <name>UDP-N-acetyl-alpha-D-glucosamine</name>
        <dbReference type="ChEBI" id="CHEBI:57705"/>
    </ligand>
</feature>
<feature type="binding site" evidence="1">
    <location>
        <position position="165"/>
    </location>
    <ligand>
        <name>UDP-N-acetyl-alpha-D-glucosamine</name>
        <dbReference type="ChEBI" id="CHEBI:57705"/>
    </ligand>
</feature>
<feature type="binding site" evidence="1">
    <location>
        <position position="193"/>
    </location>
    <ligand>
        <name>UDP-N-acetyl-alpha-D-glucosamine</name>
        <dbReference type="ChEBI" id="CHEBI:57705"/>
    </ligand>
</feature>
<feature type="binding site" evidence="1">
    <location>
        <position position="294"/>
    </location>
    <ligand>
        <name>UDP-N-acetyl-alpha-D-glucosamine</name>
        <dbReference type="ChEBI" id="CHEBI:57705"/>
    </ligand>
</feature>
<protein>
    <recommendedName>
        <fullName evidence="1">UDP-N-acetylglucosamine--N-acetylmuramyl-(pentapeptide) pyrophosphoryl-undecaprenol N-acetylglucosamine transferase</fullName>
        <ecNumber evidence="1">2.4.1.227</ecNumber>
    </recommendedName>
    <alternativeName>
        <fullName evidence="1">Undecaprenyl-PP-MurNAc-pentapeptide-UDPGlcNAc GlcNAc transferase</fullName>
    </alternativeName>
</protein>
<sequence>MAGRTILLSAGGTGGHLFPAEALAHELRARGWSVHLATDKRATRFAGTFPADEIHAIDSATFGSRNPLALLKSGLSIWRGFKQSTALINRLKPAAVVGFGGYPTLPPLYAATRRQVPTLVHEQNAVMGRANKALAPRVTAIAGGFLPESDGPFASKTVLTGNPVRPAVIQASGTPYAPSSGRGVFRLLVFGGSQGAQYFSQVVPEAVRLLPATLRSRLRIVQQARPEDEGPVRSAYDELGVKAEVSPFFTDLASRIADAHLVISRSGASTVSEIAVIGRPAILVPYPYALDHDQAANATALERAGGAEIVPQEKLSAERLRGLLEVAMGAPDKLAAMAAAAKSVGRPDASRLLADVTEAIASGETVTEFKRRRSA</sequence>